<accession>Q9P7W7</accession>
<keyword id="KW-0963">Cytoplasm</keyword>
<keyword id="KW-0539">Nucleus</keyword>
<keyword id="KW-0653">Protein transport</keyword>
<keyword id="KW-1185">Reference proteome</keyword>
<keyword id="KW-0690">Ribosome biogenesis</keyword>
<keyword id="KW-0813">Transport</keyword>
<reference key="1">
    <citation type="journal article" date="2002" name="Nature">
        <title>The genome sequence of Schizosaccharomyces pombe.</title>
        <authorList>
            <person name="Wood V."/>
            <person name="Gwilliam R."/>
            <person name="Rajandream M.A."/>
            <person name="Lyne M.H."/>
            <person name="Lyne R."/>
            <person name="Stewart A."/>
            <person name="Sgouros J.G."/>
            <person name="Peat N."/>
            <person name="Hayles J."/>
            <person name="Baker S.G."/>
            <person name="Basham D."/>
            <person name="Bowman S."/>
            <person name="Brooks K."/>
            <person name="Brown D."/>
            <person name="Brown S."/>
            <person name="Chillingworth T."/>
            <person name="Churcher C.M."/>
            <person name="Collins M."/>
            <person name="Connor R."/>
            <person name="Cronin A."/>
            <person name="Davis P."/>
            <person name="Feltwell T."/>
            <person name="Fraser A."/>
            <person name="Gentles S."/>
            <person name="Goble A."/>
            <person name="Hamlin N."/>
            <person name="Harris D.E."/>
            <person name="Hidalgo J."/>
            <person name="Hodgson G."/>
            <person name="Holroyd S."/>
            <person name="Hornsby T."/>
            <person name="Howarth S."/>
            <person name="Huckle E.J."/>
            <person name="Hunt S."/>
            <person name="Jagels K."/>
            <person name="James K.D."/>
            <person name="Jones L."/>
            <person name="Jones M."/>
            <person name="Leather S."/>
            <person name="McDonald S."/>
            <person name="McLean J."/>
            <person name="Mooney P."/>
            <person name="Moule S."/>
            <person name="Mungall K.L."/>
            <person name="Murphy L.D."/>
            <person name="Niblett D."/>
            <person name="Odell C."/>
            <person name="Oliver K."/>
            <person name="O'Neil S."/>
            <person name="Pearson D."/>
            <person name="Quail M.A."/>
            <person name="Rabbinowitsch E."/>
            <person name="Rutherford K.M."/>
            <person name="Rutter S."/>
            <person name="Saunders D."/>
            <person name="Seeger K."/>
            <person name="Sharp S."/>
            <person name="Skelton J."/>
            <person name="Simmonds M.N."/>
            <person name="Squares R."/>
            <person name="Squares S."/>
            <person name="Stevens K."/>
            <person name="Taylor K."/>
            <person name="Taylor R.G."/>
            <person name="Tivey A."/>
            <person name="Walsh S.V."/>
            <person name="Warren T."/>
            <person name="Whitehead S."/>
            <person name="Woodward J.R."/>
            <person name="Volckaert G."/>
            <person name="Aert R."/>
            <person name="Robben J."/>
            <person name="Grymonprez B."/>
            <person name="Weltjens I."/>
            <person name="Vanstreels E."/>
            <person name="Rieger M."/>
            <person name="Schaefer M."/>
            <person name="Mueller-Auer S."/>
            <person name="Gabel C."/>
            <person name="Fuchs M."/>
            <person name="Duesterhoeft A."/>
            <person name="Fritzc C."/>
            <person name="Holzer E."/>
            <person name="Moestl D."/>
            <person name="Hilbert H."/>
            <person name="Borzym K."/>
            <person name="Langer I."/>
            <person name="Beck A."/>
            <person name="Lehrach H."/>
            <person name="Reinhardt R."/>
            <person name="Pohl T.M."/>
            <person name="Eger P."/>
            <person name="Zimmermann W."/>
            <person name="Wedler H."/>
            <person name="Wambutt R."/>
            <person name="Purnelle B."/>
            <person name="Goffeau A."/>
            <person name="Cadieu E."/>
            <person name="Dreano S."/>
            <person name="Gloux S."/>
            <person name="Lelaure V."/>
            <person name="Mottier S."/>
            <person name="Galibert F."/>
            <person name="Aves S.J."/>
            <person name="Xiang Z."/>
            <person name="Hunt C."/>
            <person name="Moore K."/>
            <person name="Hurst S.M."/>
            <person name="Lucas M."/>
            <person name="Rochet M."/>
            <person name="Gaillardin C."/>
            <person name="Tallada V.A."/>
            <person name="Garzon A."/>
            <person name="Thode G."/>
            <person name="Daga R.R."/>
            <person name="Cruzado L."/>
            <person name="Jimenez J."/>
            <person name="Sanchez M."/>
            <person name="del Rey F."/>
            <person name="Benito J."/>
            <person name="Dominguez A."/>
            <person name="Revuelta J.L."/>
            <person name="Moreno S."/>
            <person name="Armstrong J."/>
            <person name="Forsburg S.L."/>
            <person name="Cerutti L."/>
            <person name="Lowe T."/>
            <person name="McCombie W.R."/>
            <person name="Paulsen I."/>
            <person name="Potashkin J."/>
            <person name="Shpakovski G.V."/>
            <person name="Ussery D."/>
            <person name="Barrell B.G."/>
            <person name="Nurse P."/>
        </authorList>
    </citation>
    <scope>NUCLEOTIDE SEQUENCE [LARGE SCALE GENOMIC DNA]</scope>
    <source>
        <strain>972 / ATCC 24843</strain>
    </source>
</reference>
<reference key="2">
    <citation type="journal article" date="2006" name="Nat. Biotechnol.">
        <title>ORFeome cloning and global analysis of protein localization in the fission yeast Schizosaccharomyces pombe.</title>
        <authorList>
            <person name="Matsuyama A."/>
            <person name="Arai R."/>
            <person name="Yashiroda Y."/>
            <person name="Shirai A."/>
            <person name="Kamata A."/>
            <person name="Sekido S."/>
            <person name="Kobayashi Y."/>
            <person name="Hashimoto A."/>
            <person name="Hamamoto M."/>
            <person name="Hiraoka Y."/>
            <person name="Horinouchi S."/>
            <person name="Yoshida M."/>
        </authorList>
    </citation>
    <scope>SUBCELLULAR LOCATION [LARGE SCALE ANALYSIS]</scope>
</reference>
<gene>
    <name evidence="4" type="primary">syo2</name>
    <name evidence="4" type="ORF">SPBC1703.03c</name>
</gene>
<comment type="function">
    <text evidence="1">Nuclear import adapter that specifically recruits the two functionally and topologically linked ribosomal proteins rpl5 and rpl11 (encoded by rpl11a and rpl11b). Guarantees that this cargo pair remains bound together from the time of synthesis in the cytoplasm until delivery to the nascent 5S rRNA in the nucleus.</text>
</comment>
<comment type="subunit">
    <text evidence="1">Forms a heterotrimeric complex with rpl5 and rpl11a or rpl11b; interaction of this complex with kap104 allows the nuclear import of the heterotrimer (By similarity). Component of a hexameric 5S RNP precursor complex; this complex acts as a precursor for ribosome assembly (By similarity).</text>
</comment>
<comment type="subcellular location">
    <subcellularLocation>
        <location evidence="2">Cytoplasm</location>
    </subcellularLocation>
    <subcellularLocation>
        <location evidence="2">Nucleus</location>
    </subcellularLocation>
</comment>
<comment type="similarity">
    <text evidence="3">Belongs to the nuclear import and ribosome assembly adapter family.</text>
</comment>
<protein>
    <recommendedName>
        <fullName evidence="4">Armadillo repeat protein involved in nucleocytoplasmic transport Syo2</fullName>
    </recommendedName>
</protein>
<organism>
    <name type="scientific">Schizosaccharomyces pombe (strain 972 / ATCC 24843)</name>
    <name type="common">Fission yeast</name>
    <dbReference type="NCBI Taxonomy" id="284812"/>
    <lineage>
        <taxon>Eukaryota</taxon>
        <taxon>Fungi</taxon>
        <taxon>Dikarya</taxon>
        <taxon>Ascomycota</taxon>
        <taxon>Taphrinomycotina</taxon>
        <taxon>Schizosaccharomycetes</taxon>
        <taxon>Schizosaccharomycetales</taxon>
        <taxon>Schizosaccharomycetaceae</taxon>
        <taxon>Schizosaccharomyces</taxon>
    </lineage>
</organism>
<dbReference type="EMBL" id="CU329671">
    <property type="protein sequence ID" value="CAB66447.1"/>
    <property type="molecule type" value="Genomic_DNA"/>
</dbReference>
<dbReference type="PIR" id="T50316">
    <property type="entry name" value="T50316"/>
</dbReference>
<dbReference type="RefSeq" id="NP_596198.1">
    <property type="nucleotide sequence ID" value="NM_001022117.2"/>
</dbReference>
<dbReference type="SMR" id="Q9P7W7"/>
<dbReference type="BioGRID" id="276271">
    <property type="interactions" value="1"/>
</dbReference>
<dbReference type="FunCoup" id="Q9P7W7">
    <property type="interactions" value="78"/>
</dbReference>
<dbReference type="STRING" id="284812.Q9P7W7"/>
<dbReference type="PaxDb" id="4896-SPBC1703.03c.1"/>
<dbReference type="EnsemblFungi" id="SPBC1703.03c.1">
    <property type="protein sequence ID" value="SPBC1703.03c.1:pep"/>
    <property type="gene ID" value="SPBC1703.03c"/>
</dbReference>
<dbReference type="GeneID" id="2539718"/>
<dbReference type="KEGG" id="spo:2539718"/>
<dbReference type="PomBase" id="SPBC1703.03c">
    <property type="gene designation" value="syo2"/>
</dbReference>
<dbReference type="VEuPathDB" id="FungiDB:SPBC1703.03c"/>
<dbReference type="eggNOG" id="ENOG502QWR9">
    <property type="taxonomic scope" value="Eukaryota"/>
</dbReference>
<dbReference type="HOGENOM" id="CLU_016860_0_0_1"/>
<dbReference type="InParanoid" id="Q9P7W7"/>
<dbReference type="OMA" id="ENELHAD"/>
<dbReference type="PhylomeDB" id="Q9P7W7"/>
<dbReference type="PRO" id="PR:Q9P7W7"/>
<dbReference type="Proteomes" id="UP000002485">
    <property type="component" value="Chromosome II"/>
</dbReference>
<dbReference type="GO" id="GO:0005829">
    <property type="term" value="C:cytosol"/>
    <property type="evidence" value="ECO:0007005"/>
    <property type="project" value="PomBase"/>
</dbReference>
<dbReference type="GO" id="GO:0005634">
    <property type="term" value="C:nucleus"/>
    <property type="evidence" value="ECO:0007005"/>
    <property type="project" value="PomBase"/>
</dbReference>
<dbReference type="GO" id="GO:0051082">
    <property type="term" value="F:unfolded protein binding"/>
    <property type="evidence" value="ECO:0000318"/>
    <property type="project" value="GO_Central"/>
</dbReference>
<dbReference type="GO" id="GO:0006606">
    <property type="term" value="P:protein import into nucleus"/>
    <property type="evidence" value="ECO:0000318"/>
    <property type="project" value="GO_Central"/>
</dbReference>
<dbReference type="GO" id="GO:0042273">
    <property type="term" value="P:ribosomal large subunit biogenesis"/>
    <property type="evidence" value="ECO:0000318"/>
    <property type="project" value="GO_Central"/>
</dbReference>
<dbReference type="CDD" id="cd13394">
    <property type="entry name" value="Syo1_like"/>
    <property type="match status" value="1"/>
</dbReference>
<dbReference type="Gene3D" id="1.25.10.10">
    <property type="entry name" value="Leucine-rich Repeat Variant"/>
    <property type="match status" value="1"/>
</dbReference>
<dbReference type="InterPro" id="IPR011989">
    <property type="entry name" value="ARM-like"/>
</dbReference>
<dbReference type="InterPro" id="IPR016024">
    <property type="entry name" value="ARM-type_fold"/>
</dbReference>
<dbReference type="InterPro" id="IPR000225">
    <property type="entry name" value="Armadillo"/>
</dbReference>
<dbReference type="InterPro" id="IPR052616">
    <property type="entry name" value="Nuclear_Import_Ribosome_Adapt"/>
</dbReference>
<dbReference type="PANTHER" id="PTHR13347">
    <property type="entry name" value="HEAT REPEAT-CONTAINING PROTEIN 3"/>
    <property type="match status" value="1"/>
</dbReference>
<dbReference type="PANTHER" id="PTHR13347:SF1">
    <property type="entry name" value="HEAT REPEAT-CONTAINING PROTEIN 3"/>
    <property type="match status" value="1"/>
</dbReference>
<dbReference type="Pfam" id="PF00514">
    <property type="entry name" value="Arm"/>
    <property type="match status" value="1"/>
</dbReference>
<dbReference type="SMART" id="SM00185">
    <property type="entry name" value="ARM"/>
    <property type="match status" value="2"/>
</dbReference>
<dbReference type="SUPFAM" id="SSF48371">
    <property type="entry name" value="ARM repeat"/>
    <property type="match status" value="1"/>
</dbReference>
<dbReference type="PROSITE" id="PS50176">
    <property type="entry name" value="ARM_REPEAT"/>
    <property type="match status" value="1"/>
</dbReference>
<proteinExistence type="inferred from homology"/>
<evidence type="ECO:0000250" key="1">
    <source>
        <dbReference type="UniProtKB" id="Q07395"/>
    </source>
</evidence>
<evidence type="ECO:0000269" key="2">
    <source>
    </source>
</evidence>
<evidence type="ECO:0000305" key="3"/>
<evidence type="ECO:0000312" key="4">
    <source>
        <dbReference type="PomBase" id="SPBC1703.03c"/>
    </source>
</evidence>
<sequence>MGRANGKRRNHRKNRMNPIQKKGFLEQEIPLNNSEAALPLLSRLDNPEIKERSWACSAISNIIASCTEGRLYLLKNGLVSKLIDRISDDSVEVVVEATGALRNLAIEEGYSICMDMYRKNVLAPLQIWQTKIVQTLDEATEGKNVLETYEDRSTFSCLCAIAENISSLLVNLGETTSQVIKVLNQKNTLVFLSRLLIPEAKIPQSVQEMALQAFFTLTDDNDDGIITWIQNSSDFALKTINQIYLYFSYPSCLVRVYSIGIIYNIYQSGFVNKKMESVVKGISLFDSFIPEALPILSDLLPSEENYRNLVRQVYDKDTYFKTKKDDLTLSSELLVIPATLELISSMTSLLQSLADGTDELEEQEDSLMEDEDLSYMDDMSNVVNEDENLIIDEIPSNTPQKGNFKLVEYMLDHVLPKVITYCVVAFEFSSEEIPSNLSNYFQEVGDRTIECLNNISWSCNSVFVESSEAFTRWKLSAGKILQWIFQTIFLRLGLGVWPFSSEGFTTACSLLWSVSKPFPAEIQVLSVDDISTLILFSSTHGSLEAQSRLLGAFGSLGRCGNIQINQLLGQTLMSCVIASDPNPLLAVEALNAIFDVYGDKSYPYDAPVFKGSGYLSQLSEALPRLKNMVKKIDRRREKHLRFRAEEALENLESFIDYKHAEYAS</sequence>
<name>SYO2_SCHPO</name>
<feature type="chain" id="PRO_0000310326" description="Armadillo repeat protein involved in nucleocytoplasmic transport Syo2">
    <location>
        <begin position="1"/>
        <end position="664"/>
    </location>
</feature>
<feature type="repeat" description="ARM">
    <location>
        <begin position="77"/>
        <end position="119"/>
    </location>
</feature>